<feature type="chain" id="PRO_0000326083" description="Importin subunit alpha-6">
    <location>
        <begin position="1"/>
        <end position="539"/>
    </location>
</feature>
<feature type="domain" description="IBB" evidence="2">
    <location>
        <begin position="1"/>
        <end position="60"/>
    </location>
</feature>
<feature type="repeat" description="ARM 1; truncated">
    <location>
        <begin position="76"/>
        <end position="118"/>
    </location>
</feature>
<feature type="repeat" description="ARM 2">
    <location>
        <begin position="119"/>
        <end position="162"/>
    </location>
</feature>
<feature type="repeat" description="ARM 3">
    <location>
        <begin position="163"/>
        <end position="207"/>
    </location>
</feature>
<feature type="repeat" description="ARM 4">
    <location>
        <begin position="208"/>
        <end position="246"/>
    </location>
</feature>
<feature type="repeat" description="ARM 5">
    <location>
        <begin position="247"/>
        <end position="291"/>
    </location>
</feature>
<feature type="repeat" description="ARM 6">
    <location>
        <begin position="292"/>
        <end position="331"/>
    </location>
</feature>
<feature type="repeat" description="ARM 7">
    <location>
        <begin position="332"/>
        <end position="373"/>
    </location>
</feature>
<feature type="repeat" description="ARM 8">
    <location>
        <begin position="374"/>
        <end position="413"/>
    </location>
</feature>
<feature type="repeat" description="ARM 9">
    <location>
        <begin position="414"/>
        <end position="456"/>
    </location>
</feature>
<feature type="repeat" description="ARM 10; atypical">
    <location>
        <begin position="460"/>
        <end position="505"/>
    </location>
</feature>
<feature type="region of interest" description="Disordered" evidence="3">
    <location>
        <begin position="1"/>
        <end position="38"/>
    </location>
</feature>
<feature type="region of interest" description="NLS binding site (major)" evidence="1">
    <location>
        <begin position="150"/>
        <end position="242"/>
    </location>
</feature>
<feature type="region of interest" description="NLS binding site (minor)" evidence="1">
    <location>
        <begin position="319"/>
        <end position="407"/>
    </location>
</feature>
<feature type="short sequence motif" description="Nuclear localization signal" evidence="1">
    <location>
        <begin position="45"/>
        <end position="54"/>
    </location>
</feature>
<feature type="compositionally biased region" description="Basic and acidic residues" evidence="3">
    <location>
        <begin position="26"/>
        <end position="38"/>
    </location>
</feature>
<keyword id="KW-0963">Cytoplasm</keyword>
<keyword id="KW-0653">Protein transport</keyword>
<keyword id="KW-1185">Reference proteome</keyword>
<keyword id="KW-0677">Repeat</keyword>
<keyword id="KW-0813">Transport</keyword>
<proteinExistence type="evidence at transcript level"/>
<reference key="1">
    <citation type="journal article" date="2004" name="Nature">
        <title>Genome sequence of the Brown Norway rat yields insights into mammalian evolution.</title>
        <authorList>
            <person name="Gibbs R.A."/>
            <person name="Weinstock G.M."/>
            <person name="Metzker M.L."/>
            <person name="Muzny D.M."/>
            <person name="Sodergren E.J."/>
            <person name="Scherer S."/>
            <person name="Scott G."/>
            <person name="Steffen D."/>
            <person name="Worley K.C."/>
            <person name="Burch P.E."/>
            <person name="Okwuonu G."/>
            <person name="Hines S."/>
            <person name="Lewis L."/>
            <person name="Deramo C."/>
            <person name="Delgado O."/>
            <person name="Dugan-Rocha S."/>
            <person name="Miner G."/>
            <person name="Morgan M."/>
            <person name="Hawes A."/>
            <person name="Gill R."/>
            <person name="Holt R.A."/>
            <person name="Adams M.D."/>
            <person name="Amanatides P.G."/>
            <person name="Baden-Tillson H."/>
            <person name="Barnstead M."/>
            <person name="Chin S."/>
            <person name="Evans C.A."/>
            <person name="Ferriera S."/>
            <person name="Fosler C."/>
            <person name="Glodek A."/>
            <person name="Gu Z."/>
            <person name="Jennings D."/>
            <person name="Kraft C.L."/>
            <person name="Nguyen T."/>
            <person name="Pfannkoch C.M."/>
            <person name="Sitter C."/>
            <person name="Sutton G.G."/>
            <person name="Venter J.C."/>
            <person name="Woodage T."/>
            <person name="Smith D."/>
            <person name="Lee H.-M."/>
            <person name="Gustafson E."/>
            <person name="Cahill P."/>
            <person name="Kana A."/>
            <person name="Doucette-Stamm L."/>
            <person name="Weinstock K."/>
            <person name="Fechtel K."/>
            <person name="Weiss R.B."/>
            <person name="Dunn D.M."/>
            <person name="Green E.D."/>
            <person name="Blakesley R.W."/>
            <person name="Bouffard G.G."/>
            <person name="De Jong P.J."/>
            <person name="Osoegawa K."/>
            <person name="Zhu B."/>
            <person name="Marra M."/>
            <person name="Schein J."/>
            <person name="Bosdet I."/>
            <person name="Fjell C."/>
            <person name="Jones S."/>
            <person name="Krzywinski M."/>
            <person name="Mathewson C."/>
            <person name="Siddiqui A."/>
            <person name="Wye N."/>
            <person name="McPherson J."/>
            <person name="Zhao S."/>
            <person name="Fraser C.M."/>
            <person name="Shetty J."/>
            <person name="Shatsman S."/>
            <person name="Geer K."/>
            <person name="Chen Y."/>
            <person name="Abramzon S."/>
            <person name="Nierman W.C."/>
            <person name="Havlak P.H."/>
            <person name="Chen R."/>
            <person name="Durbin K.J."/>
            <person name="Egan A."/>
            <person name="Ren Y."/>
            <person name="Song X.-Z."/>
            <person name="Li B."/>
            <person name="Liu Y."/>
            <person name="Qin X."/>
            <person name="Cawley S."/>
            <person name="Cooney A.J."/>
            <person name="D'Souza L.M."/>
            <person name="Martin K."/>
            <person name="Wu J.Q."/>
            <person name="Gonzalez-Garay M.L."/>
            <person name="Jackson A.R."/>
            <person name="Kalafus K.J."/>
            <person name="McLeod M.P."/>
            <person name="Milosavljevic A."/>
            <person name="Virk D."/>
            <person name="Volkov A."/>
            <person name="Wheeler D.A."/>
            <person name="Zhang Z."/>
            <person name="Bailey J.A."/>
            <person name="Eichler E.E."/>
            <person name="Tuzun E."/>
            <person name="Birney E."/>
            <person name="Mongin E."/>
            <person name="Ureta-Vidal A."/>
            <person name="Woodwark C."/>
            <person name="Zdobnov E."/>
            <person name="Bork P."/>
            <person name="Suyama M."/>
            <person name="Torrents D."/>
            <person name="Alexandersson M."/>
            <person name="Trask B.J."/>
            <person name="Young J.M."/>
            <person name="Huang H."/>
            <person name="Wang H."/>
            <person name="Xing H."/>
            <person name="Daniels S."/>
            <person name="Gietzen D."/>
            <person name="Schmidt J."/>
            <person name="Stevens K."/>
            <person name="Vitt U."/>
            <person name="Wingrove J."/>
            <person name="Camara F."/>
            <person name="Mar Alba M."/>
            <person name="Abril J.F."/>
            <person name="Guigo R."/>
            <person name="Smit A."/>
            <person name="Dubchak I."/>
            <person name="Rubin E.M."/>
            <person name="Couronne O."/>
            <person name="Poliakov A."/>
            <person name="Huebner N."/>
            <person name="Ganten D."/>
            <person name="Goesele C."/>
            <person name="Hummel O."/>
            <person name="Kreitler T."/>
            <person name="Lee Y.-A."/>
            <person name="Monti J."/>
            <person name="Schulz H."/>
            <person name="Zimdahl H."/>
            <person name="Himmelbauer H."/>
            <person name="Lehrach H."/>
            <person name="Jacob H.J."/>
            <person name="Bromberg S."/>
            <person name="Gullings-Handley J."/>
            <person name="Jensen-Seaman M.I."/>
            <person name="Kwitek A.E."/>
            <person name="Lazar J."/>
            <person name="Pasko D."/>
            <person name="Tonellato P.J."/>
            <person name="Twigger S."/>
            <person name="Ponting C.P."/>
            <person name="Duarte J.M."/>
            <person name="Rice S."/>
            <person name="Goodstadt L."/>
            <person name="Beatson S.A."/>
            <person name="Emes R.D."/>
            <person name="Winter E.E."/>
            <person name="Webber C."/>
            <person name="Brandt P."/>
            <person name="Nyakatura G."/>
            <person name="Adetobi M."/>
            <person name="Chiaromonte F."/>
            <person name="Elnitski L."/>
            <person name="Eswara P."/>
            <person name="Hardison R.C."/>
            <person name="Hou M."/>
            <person name="Kolbe D."/>
            <person name="Makova K."/>
            <person name="Miller W."/>
            <person name="Nekrutenko A."/>
            <person name="Riemer C."/>
            <person name="Schwartz S."/>
            <person name="Taylor J."/>
            <person name="Yang S."/>
            <person name="Zhang Y."/>
            <person name="Lindpaintner K."/>
            <person name="Andrews T.D."/>
            <person name="Caccamo M."/>
            <person name="Clamp M."/>
            <person name="Clarke L."/>
            <person name="Curwen V."/>
            <person name="Durbin R.M."/>
            <person name="Eyras E."/>
            <person name="Searle S.M."/>
            <person name="Cooper G.M."/>
            <person name="Batzoglou S."/>
            <person name="Brudno M."/>
            <person name="Sidow A."/>
            <person name="Stone E.A."/>
            <person name="Payseur B.A."/>
            <person name="Bourque G."/>
            <person name="Lopez-Otin C."/>
            <person name="Puente X.S."/>
            <person name="Chakrabarti K."/>
            <person name="Chatterji S."/>
            <person name="Dewey C."/>
            <person name="Pachter L."/>
            <person name="Bray N."/>
            <person name="Yap V.B."/>
            <person name="Caspi A."/>
            <person name="Tesler G."/>
            <person name="Pevzner P.A."/>
            <person name="Haussler D."/>
            <person name="Roskin K.M."/>
            <person name="Baertsch R."/>
            <person name="Clawson H."/>
            <person name="Furey T.S."/>
            <person name="Hinrichs A.S."/>
            <person name="Karolchik D."/>
            <person name="Kent W.J."/>
            <person name="Rosenbloom K.R."/>
            <person name="Trumbower H."/>
            <person name="Weirauch M."/>
            <person name="Cooper D.N."/>
            <person name="Stenson P.D."/>
            <person name="Ma B."/>
            <person name="Brent M."/>
            <person name="Arumugam M."/>
            <person name="Shteynberg D."/>
            <person name="Copley R.R."/>
            <person name="Taylor M.S."/>
            <person name="Riethman H."/>
            <person name="Mudunuri U."/>
            <person name="Peterson J."/>
            <person name="Guyer M."/>
            <person name="Felsenfeld A."/>
            <person name="Old S."/>
            <person name="Mockrin S."/>
            <person name="Collins F.S."/>
        </authorList>
    </citation>
    <scope>NUCLEOTIDE SEQUENCE [LARGE SCALE GENOMIC DNA]</scope>
    <scope>IDENTIFICATION</scope>
    <source>
        <strain>Brown Norway</strain>
    </source>
</reference>
<reference key="2">
    <citation type="journal article" date="2006" name="Pharmacogenet. Genomics">
        <title>Transcriptomic and phylogenetic analysis of Kpna genes: a family of nuclear import factors modulated in xenobiotic-mediated liver growth.</title>
        <authorList>
            <person name="Plant K.E."/>
            <person name="Everett D.M."/>
            <person name="Gordon Gibson G."/>
            <person name="Lyon J."/>
            <person name="Plant N.J."/>
        </authorList>
    </citation>
    <scope>NUCLEOTIDE SEQUENCE [MRNA] OF 4-539</scope>
    <source>
        <strain>Sprague-Dawley</strain>
        <tissue>Testis</tissue>
    </source>
</reference>
<evidence type="ECO:0000250" key="1"/>
<evidence type="ECO:0000255" key="2">
    <source>
        <dbReference type="PROSITE-ProRule" id="PRU00561"/>
    </source>
</evidence>
<evidence type="ECO:0000256" key="3">
    <source>
        <dbReference type="SAM" id="MobiDB-lite"/>
    </source>
</evidence>
<evidence type="ECO:0000305" key="4"/>
<evidence type="ECO:0000312" key="5">
    <source>
        <dbReference type="RGD" id="1561324"/>
    </source>
</evidence>
<protein>
    <recommendedName>
        <fullName evidence="4">Importin subunit alpha-6</fullName>
    </recommendedName>
    <alternativeName>
        <fullName>Karyopherin subunit alpha-5</fullName>
    </alternativeName>
</protein>
<dbReference type="EMBL" id="AABR07045039">
    <property type="status" value="NOT_ANNOTATED_CDS"/>
    <property type="molecule type" value="Genomic_DNA"/>
</dbReference>
<dbReference type="EMBL" id="AABR07045040">
    <property type="status" value="NOT_ANNOTATED_CDS"/>
    <property type="molecule type" value="Genomic_DNA"/>
</dbReference>
<dbReference type="EMBL" id="AY779029">
    <property type="protein sequence ID" value="AAX07456.1"/>
    <property type="molecule type" value="mRNA"/>
</dbReference>
<dbReference type="RefSeq" id="NP_001020284.2">
    <property type="nucleotide sequence ID" value="NM_001025113.3"/>
</dbReference>
<dbReference type="RefSeq" id="XP_006256504.1">
    <property type="nucleotide sequence ID" value="XM_006256442.2"/>
</dbReference>
<dbReference type="SMR" id="Q56R16"/>
<dbReference type="FunCoup" id="Q56R16">
    <property type="interactions" value="1854"/>
</dbReference>
<dbReference type="STRING" id="10116.ENSRNOP00000039571"/>
<dbReference type="PhosphoSitePlus" id="Q56R16"/>
<dbReference type="jPOST" id="Q56R16"/>
<dbReference type="PaxDb" id="10116-ENSRNOP00000039571"/>
<dbReference type="Ensembl" id="ENSRNOT00000097623.1">
    <property type="protein sequence ID" value="ENSRNOP00000079511.1"/>
    <property type="gene ID" value="ENSRNOG00000030109.5"/>
</dbReference>
<dbReference type="GeneID" id="294392"/>
<dbReference type="KEGG" id="rno:294392"/>
<dbReference type="UCSC" id="RGD:1561324">
    <property type="organism name" value="rat"/>
</dbReference>
<dbReference type="AGR" id="RGD:1561324"/>
<dbReference type="CTD" id="3841"/>
<dbReference type="RGD" id="1561324">
    <property type="gene designation" value="Kpna5"/>
</dbReference>
<dbReference type="eggNOG" id="KOG0166">
    <property type="taxonomic scope" value="Eukaryota"/>
</dbReference>
<dbReference type="GeneTree" id="ENSGT01050000244950"/>
<dbReference type="HOGENOM" id="CLU_018084_6_0_1"/>
<dbReference type="InParanoid" id="Q56R16"/>
<dbReference type="OMA" id="NWSTISV"/>
<dbReference type="OrthoDB" id="29145at2759"/>
<dbReference type="PhylomeDB" id="Q56R16"/>
<dbReference type="TreeFam" id="TF354205"/>
<dbReference type="PRO" id="PR:Q56R16"/>
<dbReference type="Proteomes" id="UP000002494">
    <property type="component" value="Chromosome 20"/>
</dbReference>
<dbReference type="Bgee" id="ENSRNOG00000030109">
    <property type="expression patterns" value="Expressed in jejunum and 19 other cell types or tissues"/>
</dbReference>
<dbReference type="GO" id="GO:0005829">
    <property type="term" value="C:cytosol"/>
    <property type="evidence" value="ECO:0007669"/>
    <property type="project" value="Ensembl"/>
</dbReference>
<dbReference type="GO" id="GO:0005654">
    <property type="term" value="C:nucleoplasm"/>
    <property type="evidence" value="ECO:0000318"/>
    <property type="project" value="GO_Central"/>
</dbReference>
<dbReference type="GO" id="GO:0005634">
    <property type="term" value="C:nucleus"/>
    <property type="evidence" value="ECO:0000318"/>
    <property type="project" value="GO_Central"/>
</dbReference>
<dbReference type="GO" id="GO:0061608">
    <property type="term" value="F:nuclear import signal receptor activity"/>
    <property type="evidence" value="ECO:0000318"/>
    <property type="project" value="GO_Central"/>
</dbReference>
<dbReference type="GO" id="GO:0008139">
    <property type="term" value="F:nuclear localization sequence binding"/>
    <property type="evidence" value="ECO:0000318"/>
    <property type="project" value="GO_Central"/>
</dbReference>
<dbReference type="GO" id="GO:0006607">
    <property type="term" value="P:NLS-bearing protein import into nucleus"/>
    <property type="evidence" value="ECO:0000318"/>
    <property type="project" value="GO_Central"/>
</dbReference>
<dbReference type="FunFam" id="1.20.5.690:FF:000001">
    <property type="entry name" value="Importin subunit alpha"/>
    <property type="match status" value="1"/>
</dbReference>
<dbReference type="FunFam" id="1.25.10.10:FF:000013">
    <property type="entry name" value="Importin subunit alpha"/>
    <property type="match status" value="1"/>
</dbReference>
<dbReference type="Gene3D" id="1.20.5.690">
    <property type="entry name" value="Importin-alpha, importin-beta-binding domain"/>
    <property type="match status" value="1"/>
</dbReference>
<dbReference type="Gene3D" id="1.25.10.10">
    <property type="entry name" value="Leucine-rich Repeat Variant"/>
    <property type="match status" value="1"/>
</dbReference>
<dbReference type="InterPro" id="IPR011989">
    <property type="entry name" value="ARM-like"/>
</dbReference>
<dbReference type="InterPro" id="IPR016024">
    <property type="entry name" value="ARM-type_fold"/>
</dbReference>
<dbReference type="InterPro" id="IPR032413">
    <property type="entry name" value="Arm_3"/>
</dbReference>
<dbReference type="InterPro" id="IPR000225">
    <property type="entry name" value="Armadillo"/>
</dbReference>
<dbReference type="InterPro" id="IPR002652">
    <property type="entry name" value="Importin-a_IBB"/>
</dbReference>
<dbReference type="InterPro" id="IPR036975">
    <property type="entry name" value="Importin-a_IBB_sf"/>
</dbReference>
<dbReference type="InterPro" id="IPR024931">
    <property type="entry name" value="Importin_alpha"/>
</dbReference>
<dbReference type="PANTHER" id="PTHR23316">
    <property type="entry name" value="IMPORTIN ALPHA"/>
    <property type="match status" value="1"/>
</dbReference>
<dbReference type="Pfam" id="PF00514">
    <property type="entry name" value="Arm"/>
    <property type="match status" value="8"/>
</dbReference>
<dbReference type="Pfam" id="PF16186">
    <property type="entry name" value="Arm_3"/>
    <property type="match status" value="1"/>
</dbReference>
<dbReference type="Pfam" id="PF01749">
    <property type="entry name" value="IBB"/>
    <property type="match status" value="1"/>
</dbReference>
<dbReference type="PIRSF" id="PIRSF005673">
    <property type="entry name" value="Importin_alpha"/>
    <property type="match status" value="1"/>
</dbReference>
<dbReference type="SMART" id="SM00185">
    <property type="entry name" value="ARM"/>
    <property type="match status" value="8"/>
</dbReference>
<dbReference type="SUPFAM" id="SSF48371">
    <property type="entry name" value="ARM repeat"/>
    <property type="match status" value="1"/>
</dbReference>
<dbReference type="PROSITE" id="PS50176">
    <property type="entry name" value="ARM_REPEAT"/>
    <property type="match status" value="2"/>
</dbReference>
<dbReference type="PROSITE" id="PS51214">
    <property type="entry name" value="IBB"/>
    <property type="match status" value="1"/>
</dbReference>
<name>IMA6_RAT</name>
<sequence>MDSMASPGKDNYRMKSYKNKALNPQEMRRRREEEGIQLRKQKREEQLFKRRNVSLPRNDDCMLESPIQDPDVSSTVPIPEEDMITADMIQMIFSNNAEQQLTATQKFRKLLSKEPNPPIDQVIQKPGVVQRFVKFLERNENCTLQFEAAWALTNIASGTFLHTKVVIETGAVPIFIRLLTSEHEDVQEQAVWALGNIAGDNAECRDFVLNCEILPPLLELLTNSNRLTTTRNAVWALSNLCRGKNPPPNFSKVSPCLNVLSRLLFSSDPDVLADVCWALSYLSDGPNDKIQVVIDSGVCRRLVELLMHNDYKVVSPALRAVGNIVTGDDIQTQVILNCSALPCLLHLLGSPKESVRKEACWTISNITAGNRMQIQAVIDGSIFPVLIEVLQKAEFRTRKEAAWAITNATSGGAPEQIRYLVTLGCIKPLCDLLTVMDSKIVQVALNGLENILRLGERESKQNGVGINPYCALIEEAYGLDKIEFLQSHENQEIYQKAFDLIERYFGVEEDDPSLVPQVDEQQRQFLFQQCEAPGEGFQL</sequence>
<comment type="function">
    <text evidence="1">Functions in nuclear protein import as an adapter protein for nuclear receptor KPNB1. Binds specifically and directly to substrates containing either a simple or bipartite NLS motif. Docking of the importin/substrate complex to the nuclear pore complex (NPC) is mediated by KPNB1 through binding to nucleoporin FxFG repeats and the complex is subsequently translocated through the pore by an energy requiring, Ran-dependent mechanism. At the nucleoplasmic side of the NPC, Ran binds to importin-beta and the three components separate and importin-alpha and -beta are re-exported from the nucleus to the cytoplasm where GTP hydrolysis releases Ran from importin. The directionality of nuclear import is thought to be conferred by an asymmetric distribution of the GTP- and GDP-bound forms of Ran between the cytoplasm and nucleus. Mediates nuclear import of STAT1 homodimers and STAT1/STAT2 heterodimers by recognizing non-classical NLSs of STAT1 and STAT2 through ARM repeats 8-9 (By similarity).</text>
</comment>
<comment type="subunit">
    <text evidence="1">Forms a complex with importin subunit beta-1.</text>
</comment>
<comment type="subcellular location">
    <subcellularLocation>
        <location evidence="1">Cytoplasm</location>
    </subcellularLocation>
</comment>
<comment type="domain">
    <text evidence="1">Consists of an N-terminal hydrophilic region, a hydrophobic central region composed of 10 repeats, and a short hydrophilic C-terminus. The N-terminal hydrophilic region contains the importin beta binding domain (IBB domain), which is sufficient for binding importin beta and essential for nuclear protein import (By similarity).</text>
</comment>
<comment type="domain">
    <text evidence="1">The IBB domain is thought to act as an intrasteric autoregulatory sequence by interacting with the internal autoinhibitory NLS. Binding of KPNB1 probably overlaps the internal NLS and contributes to a high affinity for cytoplasmic NLS-containing cargo substrates. After dissociation of the importin/substrate complex in the nucleus the internal autohibitory NLS contributes to a low affinity for nuclear NLS-containing proteins (By similarity).</text>
</comment>
<comment type="domain">
    <text evidence="1">The major and minor NLS binding sites are mainly involved in recognition of simple or bipartite NLS motifs. Structurally located within in a helical surface groove they contain several conserved Trp and Asn residues of the corresponding third helices (H3) of ARM repeats which mainly contribute to binding (By similarity).</text>
</comment>
<comment type="similarity">
    <text evidence="4">Belongs to the importin alpha family.</text>
</comment>
<gene>
    <name evidence="5" type="primary">Kpna5</name>
</gene>
<organism>
    <name type="scientific">Rattus norvegicus</name>
    <name type="common">Rat</name>
    <dbReference type="NCBI Taxonomy" id="10116"/>
    <lineage>
        <taxon>Eukaryota</taxon>
        <taxon>Metazoa</taxon>
        <taxon>Chordata</taxon>
        <taxon>Craniata</taxon>
        <taxon>Vertebrata</taxon>
        <taxon>Euteleostomi</taxon>
        <taxon>Mammalia</taxon>
        <taxon>Eutheria</taxon>
        <taxon>Euarchontoglires</taxon>
        <taxon>Glires</taxon>
        <taxon>Rodentia</taxon>
        <taxon>Myomorpha</taxon>
        <taxon>Muroidea</taxon>
        <taxon>Muridae</taxon>
        <taxon>Murinae</taxon>
        <taxon>Rattus</taxon>
    </lineage>
</organism>
<accession>Q56R16</accession>
<accession>A0A0H2UHW5</accession>